<feature type="chain" id="PRO_0000382591" description="Ribosomal RNA small subunit methyltransferase F">
    <location>
        <begin position="1"/>
        <end position="478"/>
    </location>
</feature>
<feature type="active site" description="Nucleophile" evidence="1">
    <location>
        <position position="245"/>
    </location>
</feature>
<feature type="binding site" evidence="1">
    <location>
        <begin position="123"/>
        <end position="129"/>
    </location>
    <ligand>
        <name>S-adenosyl-L-methionine</name>
        <dbReference type="ChEBI" id="CHEBI:59789"/>
    </ligand>
</feature>
<feature type="binding site" evidence="1">
    <location>
        <position position="147"/>
    </location>
    <ligand>
        <name>S-adenosyl-L-methionine</name>
        <dbReference type="ChEBI" id="CHEBI:59789"/>
    </ligand>
</feature>
<feature type="binding site" evidence="1">
    <location>
        <position position="174"/>
    </location>
    <ligand>
        <name>S-adenosyl-L-methionine</name>
        <dbReference type="ChEBI" id="CHEBI:59789"/>
    </ligand>
</feature>
<feature type="binding site" evidence="1">
    <location>
        <position position="192"/>
    </location>
    <ligand>
        <name>S-adenosyl-L-methionine</name>
        <dbReference type="ChEBI" id="CHEBI:59789"/>
    </ligand>
</feature>
<gene>
    <name evidence="1" type="primary">rsmF</name>
    <name type="ordered locus">VIBHAR_02352</name>
</gene>
<keyword id="KW-0963">Cytoplasm</keyword>
<keyword id="KW-0489">Methyltransferase</keyword>
<keyword id="KW-0694">RNA-binding</keyword>
<keyword id="KW-0698">rRNA processing</keyword>
<keyword id="KW-0949">S-adenosyl-L-methionine</keyword>
<keyword id="KW-0808">Transferase</keyword>
<evidence type="ECO:0000255" key="1">
    <source>
        <dbReference type="HAMAP-Rule" id="MF_01579"/>
    </source>
</evidence>
<evidence type="ECO:0000305" key="2"/>
<proteinExistence type="inferred from homology"/>
<sequence>MHPNVYIPEAFLEKIQTILPAHLNMEDFIASCQKPLRKSIRVNTLKISVEAFLERAEAKGWKLSPVPWCNTGFWIEADESVVPLGNTAEHMSGLFYIQEASSMMPVSALFMNDESYDAVLDTAAAPGSKTTQIAALMNNEGVLVANEYAASRVKVLHANIERCGVRNAALSNFDGRVFGGWLPEQFDAVLLDAPCSGEGTVRKDEDAMKNWTQSSVVEIADTQKDLIESAFHALKPGGVMVYSTCTLSTEENQQVCHHLKETFGDAVEFESLKDLFENAEAALTEEGFLHIFPQVYDCEGFFVARIRKLTAVEAPKVKKRMGKFPFSKASNKESAEIAKQLQNTMDIKVPEDSTVWIREKDVWLFPDALEPMIGELRFSRMGIKIAEAHKNGYRWQHQVATALATGDEKNAIELTIEEAREWYMGRDVRPQNIPADMKTGKGEVFVKYEGAIIGLGKWVSNRIKNGLPRELVRDKNLF</sequence>
<accession>A7N0K6</accession>
<protein>
    <recommendedName>
        <fullName evidence="1">Ribosomal RNA small subunit methyltransferase F</fullName>
        <ecNumber evidence="1">2.1.1.178</ecNumber>
    </recommendedName>
    <alternativeName>
        <fullName evidence="1">16S rRNA m5C1407 methyltransferase</fullName>
    </alternativeName>
    <alternativeName>
        <fullName evidence="1">rRNA (cytosine-C(5)-)-methyltransferase RsmF</fullName>
    </alternativeName>
</protein>
<organism>
    <name type="scientific">Vibrio campbellii (strain ATCC BAA-1116)</name>
    <dbReference type="NCBI Taxonomy" id="2902295"/>
    <lineage>
        <taxon>Bacteria</taxon>
        <taxon>Pseudomonadati</taxon>
        <taxon>Pseudomonadota</taxon>
        <taxon>Gammaproteobacteria</taxon>
        <taxon>Vibrionales</taxon>
        <taxon>Vibrionaceae</taxon>
        <taxon>Vibrio</taxon>
    </lineage>
</organism>
<comment type="function">
    <text evidence="1">Specifically methylates the cytosine at position 1407 (m5C1407) of 16S rRNA.</text>
</comment>
<comment type="catalytic activity">
    <reaction evidence="1">
        <text>cytidine(1407) in 16S rRNA + S-adenosyl-L-methionine = 5-methylcytidine(1407) in 16S rRNA + S-adenosyl-L-homocysteine + H(+)</text>
        <dbReference type="Rhea" id="RHEA:42756"/>
        <dbReference type="Rhea" id="RHEA-COMP:10223"/>
        <dbReference type="Rhea" id="RHEA-COMP:10224"/>
        <dbReference type="ChEBI" id="CHEBI:15378"/>
        <dbReference type="ChEBI" id="CHEBI:57856"/>
        <dbReference type="ChEBI" id="CHEBI:59789"/>
        <dbReference type="ChEBI" id="CHEBI:74483"/>
        <dbReference type="ChEBI" id="CHEBI:82748"/>
        <dbReference type="EC" id="2.1.1.178"/>
    </reaction>
</comment>
<comment type="subcellular location">
    <subcellularLocation>
        <location evidence="1">Cytoplasm</location>
    </subcellularLocation>
</comment>
<comment type="similarity">
    <text evidence="1">Belongs to the class I-like SAM-binding methyltransferase superfamily. RsmB/NOP family.</text>
</comment>
<comment type="sequence caution" evidence="2">
    <conflict type="erroneous initiation">
        <sequence resource="EMBL-CDS" id="ABU71314"/>
    </conflict>
</comment>
<dbReference type="EC" id="2.1.1.178" evidence="1"/>
<dbReference type="EMBL" id="CP000789">
    <property type="protein sequence ID" value="ABU71314.1"/>
    <property type="status" value="ALT_INIT"/>
    <property type="molecule type" value="Genomic_DNA"/>
</dbReference>
<dbReference type="RefSeq" id="WP_041853343.1">
    <property type="nucleotide sequence ID" value="NC_022269.1"/>
</dbReference>
<dbReference type="SMR" id="A7N0K6"/>
<dbReference type="KEGG" id="vha:VIBHAR_02352"/>
<dbReference type="PATRIC" id="fig|338187.36.peg.2279"/>
<dbReference type="Proteomes" id="UP000008152">
    <property type="component" value="Chromosome I"/>
</dbReference>
<dbReference type="GO" id="GO:0005737">
    <property type="term" value="C:cytoplasm"/>
    <property type="evidence" value="ECO:0007669"/>
    <property type="project" value="UniProtKB-SubCell"/>
</dbReference>
<dbReference type="GO" id="GO:0003723">
    <property type="term" value="F:RNA binding"/>
    <property type="evidence" value="ECO:0007669"/>
    <property type="project" value="UniProtKB-KW"/>
</dbReference>
<dbReference type="GO" id="GO:0009383">
    <property type="term" value="F:rRNA (cytosine-C5-)-methyltransferase activity"/>
    <property type="evidence" value="ECO:0007669"/>
    <property type="project" value="TreeGrafter"/>
</dbReference>
<dbReference type="GO" id="GO:0070475">
    <property type="term" value="P:rRNA base methylation"/>
    <property type="evidence" value="ECO:0007669"/>
    <property type="project" value="TreeGrafter"/>
</dbReference>
<dbReference type="CDD" id="cd02440">
    <property type="entry name" value="AdoMet_MTases"/>
    <property type="match status" value="1"/>
</dbReference>
<dbReference type="Gene3D" id="3.10.450.720">
    <property type="match status" value="1"/>
</dbReference>
<dbReference type="Gene3D" id="3.40.50.150">
    <property type="entry name" value="Vaccinia Virus protein VP39"/>
    <property type="match status" value="1"/>
</dbReference>
<dbReference type="HAMAP" id="MF_01579">
    <property type="entry name" value="16SrRNA_methyltr_F"/>
    <property type="match status" value="1"/>
</dbReference>
<dbReference type="InterPro" id="IPR031341">
    <property type="entry name" value="Methyltr_RsmF_N"/>
</dbReference>
<dbReference type="InterPro" id="IPR049560">
    <property type="entry name" value="MeTrfase_RsmB-F_NOP2_cat"/>
</dbReference>
<dbReference type="InterPro" id="IPR001678">
    <property type="entry name" value="MeTrfase_RsmB-F_NOP2_dom"/>
</dbReference>
<dbReference type="InterPro" id="IPR027391">
    <property type="entry name" value="Nol1_Nop2_Fmu_2"/>
</dbReference>
<dbReference type="InterPro" id="IPR011023">
    <property type="entry name" value="Nop2p"/>
</dbReference>
<dbReference type="InterPro" id="IPR023267">
    <property type="entry name" value="RCMT"/>
</dbReference>
<dbReference type="InterPro" id="IPR023545">
    <property type="entry name" value="rRNA_ssu_MeTfrase_F"/>
</dbReference>
<dbReference type="InterPro" id="IPR018314">
    <property type="entry name" value="RsmB/NOL1/NOP2-like_CS"/>
</dbReference>
<dbReference type="InterPro" id="IPR029063">
    <property type="entry name" value="SAM-dependent_MTases_sf"/>
</dbReference>
<dbReference type="InterPro" id="IPR048457">
    <property type="entry name" value="YebU_pre-PUA_dom"/>
</dbReference>
<dbReference type="NCBIfam" id="TIGR00446">
    <property type="entry name" value="nop2p"/>
    <property type="match status" value="1"/>
</dbReference>
<dbReference type="NCBIfam" id="NF008898">
    <property type="entry name" value="PRK11933.1"/>
    <property type="match status" value="1"/>
</dbReference>
<dbReference type="PANTHER" id="PTHR22807:SF30">
    <property type="entry name" value="28S RRNA (CYTOSINE(4447)-C(5))-METHYLTRANSFERASE-RELATED"/>
    <property type="match status" value="1"/>
</dbReference>
<dbReference type="PANTHER" id="PTHR22807">
    <property type="entry name" value="NOP2 YEAST -RELATED NOL1/NOP2/FMU SUN DOMAIN-CONTAINING"/>
    <property type="match status" value="1"/>
</dbReference>
<dbReference type="Pfam" id="PF01189">
    <property type="entry name" value="Methyltr_RsmB-F"/>
    <property type="match status" value="1"/>
</dbReference>
<dbReference type="Pfam" id="PF17125">
    <property type="entry name" value="Methyltr_RsmF_N"/>
    <property type="match status" value="1"/>
</dbReference>
<dbReference type="Pfam" id="PF13636">
    <property type="entry name" value="Methyltranf_PUA"/>
    <property type="match status" value="1"/>
</dbReference>
<dbReference type="Pfam" id="PF21150">
    <property type="entry name" value="YebU_pre-PUA_dom"/>
    <property type="match status" value="1"/>
</dbReference>
<dbReference type="PRINTS" id="PR02008">
    <property type="entry name" value="RCMTFAMILY"/>
</dbReference>
<dbReference type="SUPFAM" id="SSF53335">
    <property type="entry name" value="S-adenosyl-L-methionine-dependent methyltransferases"/>
    <property type="match status" value="1"/>
</dbReference>
<dbReference type="PROSITE" id="PS01153">
    <property type="entry name" value="NOL1_NOP2_SUN"/>
    <property type="match status" value="1"/>
</dbReference>
<dbReference type="PROSITE" id="PS51686">
    <property type="entry name" value="SAM_MT_RSMB_NOP"/>
    <property type="match status" value="1"/>
</dbReference>
<name>RSMF_VIBC1</name>
<reference key="1">
    <citation type="submission" date="2007-08" db="EMBL/GenBank/DDBJ databases">
        <authorList>
            <consortium name="The Vibrio harveyi Genome Sequencing Project"/>
            <person name="Bassler B."/>
            <person name="Clifton S.W."/>
            <person name="Fulton L."/>
            <person name="Delehaunty K."/>
            <person name="Fronick C."/>
            <person name="Harrison M."/>
            <person name="Markivic C."/>
            <person name="Fulton R."/>
            <person name="Tin-Wollam A.-M."/>
            <person name="Shah N."/>
            <person name="Pepin K."/>
            <person name="Nash W."/>
            <person name="Thiruvilangam P."/>
            <person name="Bhonagiri V."/>
            <person name="Waters C."/>
            <person name="Tu K.C."/>
            <person name="Irgon J."/>
            <person name="Wilson R.K."/>
        </authorList>
    </citation>
    <scope>NUCLEOTIDE SEQUENCE [LARGE SCALE GENOMIC DNA]</scope>
    <source>
        <strain>ATCC BAA-1116 / BB120</strain>
    </source>
</reference>